<proteinExistence type="evidence at protein level"/>
<keyword id="KW-0007">Acetylation</keyword>
<keyword id="KW-0025">Alternative splicing</keyword>
<keyword id="KW-0225">Disease variant</keyword>
<keyword id="KW-0256">Endoplasmic reticulum</keyword>
<keyword id="KW-0275">Fatty acid biosynthesis</keyword>
<keyword id="KW-0276">Fatty acid metabolism</keyword>
<keyword id="KW-0977">Ichthyosis</keyword>
<keyword id="KW-0444">Lipid biosynthesis</keyword>
<keyword id="KW-0443">Lipid metabolism</keyword>
<keyword id="KW-0472">Membrane</keyword>
<keyword id="KW-1267">Proteomics identification</keyword>
<keyword id="KW-1185">Reference proteome</keyword>
<keyword id="KW-0808">Transferase</keyword>
<keyword id="KW-0812">Transmembrane</keyword>
<keyword id="KW-1133">Transmembrane helix</keyword>
<comment type="function">
    <text evidence="1 3 4 5 6">Catalyzes the first and rate-limiting reaction of the four reactions that constitute the long-chain fatty acids elongation cycle (PubMed:29496980, PubMed:30487246). This endoplasmic reticulum-bound enzymatic process allows the addition of 2 carbons to the chain of long- and very long-chain fatty acids (VLCFAs) per cycle. Condensing enzyme that exhibits activity toward saturated and monounsaturated acyl-CoA substrates, with the highest activity towards C22:0 acyl-CoA. May participate in the production of both saturated and monounsaturated VLCFAs of different chain lengths that are involved in multiple biological processes as precursors of membrane lipids and lipid mediators. Important for saturated C24:0 and monounsaturated C24:1 sphingolipid synthesis (PubMed:20937905). Indirectly inhibits RPE65 via production of VLCFAs.</text>
</comment>
<comment type="catalytic activity">
    <reaction evidence="1 2 3 4 5 6">
        <text>a very-long-chain acyl-CoA + malonyl-CoA + H(+) = a very-long-chain 3-oxoacyl-CoA + CO2 + CoA</text>
        <dbReference type="Rhea" id="RHEA:32727"/>
        <dbReference type="ChEBI" id="CHEBI:15378"/>
        <dbReference type="ChEBI" id="CHEBI:16526"/>
        <dbReference type="ChEBI" id="CHEBI:57287"/>
        <dbReference type="ChEBI" id="CHEBI:57384"/>
        <dbReference type="ChEBI" id="CHEBI:90725"/>
        <dbReference type="ChEBI" id="CHEBI:90736"/>
        <dbReference type="EC" id="2.3.1.199"/>
    </reaction>
    <physiologicalReaction direction="left-to-right" evidence="4">
        <dbReference type="Rhea" id="RHEA:32728"/>
    </physiologicalReaction>
</comment>
<comment type="catalytic activity">
    <reaction evidence="2 4">
        <text>eicosanoyl-CoA + malonyl-CoA + H(+) = 3-oxodocosanoyl-CoA + CO2 + CoA</text>
        <dbReference type="Rhea" id="RHEA:35327"/>
        <dbReference type="ChEBI" id="CHEBI:15378"/>
        <dbReference type="ChEBI" id="CHEBI:16526"/>
        <dbReference type="ChEBI" id="CHEBI:57287"/>
        <dbReference type="ChEBI" id="CHEBI:57380"/>
        <dbReference type="ChEBI" id="CHEBI:57384"/>
        <dbReference type="ChEBI" id="CHEBI:71451"/>
    </reaction>
    <physiologicalReaction direction="left-to-right" evidence="4">
        <dbReference type="Rhea" id="RHEA:35328"/>
    </physiologicalReaction>
</comment>
<comment type="catalytic activity">
    <reaction evidence="4">
        <text>(11Z)-eicosenoyl-CoA + malonyl-CoA + H(+) = 3-oxo-(13Z)-docosenoyl-CoA + CO2 + CoA</text>
        <dbReference type="Rhea" id="RHEA:36527"/>
        <dbReference type="ChEBI" id="CHEBI:15378"/>
        <dbReference type="ChEBI" id="CHEBI:16526"/>
        <dbReference type="ChEBI" id="CHEBI:57287"/>
        <dbReference type="ChEBI" id="CHEBI:57384"/>
        <dbReference type="ChEBI" id="CHEBI:74069"/>
        <dbReference type="ChEBI" id="CHEBI:74070"/>
    </reaction>
    <physiologicalReaction direction="left-to-right" evidence="10">
        <dbReference type="Rhea" id="RHEA:36528"/>
    </physiologicalReaction>
</comment>
<comment type="catalytic activity">
    <reaction evidence="2 4">
        <text>docosanoyl-CoA + malonyl-CoA + H(+) = 3-oxotetracosanoyl-CoA + CO2 + CoA</text>
        <dbReference type="Rhea" id="RHEA:36507"/>
        <dbReference type="ChEBI" id="CHEBI:15378"/>
        <dbReference type="ChEBI" id="CHEBI:16526"/>
        <dbReference type="ChEBI" id="CHEBI:57287"/>
        <dbReference type="ChEBI" id="CHEBI:57384"/>
        <dbReference type="ChEBI" id="CHEBI:65059"/>
        <dbReference type="ChEBI" id="CHEBI:73977"/>
    </reaction>
    <physiologicalReaction direction="left-to-right" evidence="4">
        <dbReference type="Rhea" id="RHEA:36508"/>
    </physiologicalReaction>
</comment>
<comment type="catalytic activity">
    <reaction evidence="4">
        <text>(13Z)-docosenoyl-CoA + malonyl-CoA + H(+) = 3-oxo-(15Z)-tetracosenoyl-CoA + CO2 + CoA</text>
        <dbReference type="Rhea" id="RHEA:36531"/>
        <dbReference type="ChEBI" id="CHEBI:15378"/>
        <dbReference type="ChEBI" id="CHEBI:16526"/>
        <dbReference type="ChEBI" id="CHEBI:57287"/>
        <dbReference type="ChEBI" id="CHEBI:57384"/>
        <dbReference type="ChEBI" id="CHEBI:74068"/>
        <dbReference type="ChEBI" id="CHEBI:74071"/>
    </reaction>
    <physiologicalReaction direction="left-to-right" evidence="4">
        <dbReference type="Rhea" id="RHEA:36532"/>
    </physiologicalReaction>
</comment>
<comment type="catalytic activity">
    <reaction evidence="4">
        <text>tetracosanoyl-CoA + malonyl-CoA + H(+) = 3-oxohexacosanoyl-CoA + CO2 + CoA</text>
        <dbReference type="Rhea" id="RHEA:36515"/>
        <dbReference type="ChEBI" id="CHEBI:15378"/>
        <dbReference type="ChEBI" id="CHEBI:16526"/>
        <dbReference type="ChEBI" id="CHEBI:57287"/>
        <dbReference type="ChEBI" id="CHEBI:57384"/>
        <dbReference type="ChEBI" id="CHEBI:65052"/>
        <dbReference type="ChEBI" id="CHEBI:73980"/>
    </reaction>
    <physiologicalReaction direction="left-to-right" evidence="4">
        <dbReference type="Rhea" id="RHEA:36516"/>
    </physiologicalReaction>
</comment>
<comment type="catalytic activity">
    <reaction evidence="4">
        <text>hexacosanoyl-CoA + malonyl-CoA + H(+) = 3-oxooctacosanyol-CoA + CO2 + CoA</text>
        <dbReference type="Rhea" id="RHEA:36519"/>
        <dbReference type="ChEBI" id="CHEBI:15378"/>
        <dbReference type="ChEBI" id="CHEBI:16526"/>
        <dbReference type="ChEBI" id="CHEBI:57287"/>
        <dbReference type="ChEBI" id="CHEBI:57384"/>
        <dbReference type="ChEBI" id="CHEBI:64868"/>
        <dbReference type="ChEBI" id="CHEBI:73976"/>
    </reaction>
    <physiologicalReaction direction="left-to-right" evidence="4">
        <dbReference type="Rhea" id="RHEA:36520"/>
    </physiologicalReaction>
</comment>
<comment type="catalytic activity">
    <reaction evidence="2 4">
        <text>octadecanoyl-CoA + malonyl-CoA + H(+) = 3-oxoeicosanoyl-CoA + CO2 + CoA</text>
        <dbReference type="Rhea" id="RHEA:35319"/>
        <dbReference type="ChEBI" id="CHEBI:15378"/>
        <dbReference type="ChEBI" id="CHEBI:16526"/>
        <dbReference type="ChEBI" id="CHEBI:57287"/>
        <dbReference type="ChEBI" id="CHEBI:57384"/>
        <dbReference type="ChEBI" id="CHEBI:57394"/>
        <dbReference type="ChEBI" id="CHEBI:65115"/>
    </reaction>
    <physiologicalReaction direction="left-to-right" evidence="4">
        <dbReference type="Rhea" id="RHEA:35320"/>
    </physiologicalReaction>
</comment>
<comment type="pathway">
    <text evidence="1 3 4 5">Lipid metabolism; fatty acid biosynthesis.</text>
</comment>
<comment type="subunit">
    <text evidence="1 4 7">Interacts with LASS2 and HSD17B12. Interacts with TECR (PubMed:20937905, PubMed:38422897).</text>
</comment>
<comment type="subcellular location">
    <subcellularLocation>
        <location evidence="1 4 6">Endoplasmic reticulum membrane</location>
        <topology evidence="1">Multi-pass membrane protein</topology>
    </subcellularLocation>
</comment>
<comment type="alternative products">
    <event type="alternative splicing"/>
    <isoform>
        <id>Q9BW60-1</id>
        <name>1</name>
        <sequence type="displayed"/>
    </isoform>
    <isoform>
        <id>Q9BW60-2</id>
        <name>2</name>
        <sequence type="described" ref="VSP_045436"/>
    </isoform>
</comment>
<comment type="tissue specificity">
    <text evidence="4 6">Ubiquitous.</text>
</comment>
<comment type="domain">
    <text evidence="1">The C-terminal di-lysine motif may confer endoplasmic reticulum localization.</text>
</comment>
<comment type="disease" evidence="5 6">
    <disease id="DI-05630">
        <name>Ichthyotic keratoderma, spasticity, hypomyelination, and dysmorphic facies</name>
        <acronym>IKSHD</acronym>
        <description>An autosomal dominant disease characterized by ichthyosis due to epidermal hyperproliferation and increased keratinisation, hypomyelination of the central white matter, spastic paraplegia, central nystagmus, optic atrophy, reduction of peripheral vision and visual acuity, and dysmorphic facial features.</description>
        <dbReference type="MIM" id="618527"/>
    </disease>
    <text>The disease is caused by variants affecting the gene represented in this entry.</text>
</comment>
<comment type="similarity">
    <text evidence="1">Belongs to the ELO family. ELOVL1 subfamily.</text>
</comment>
<comment type="sequence caution" evidence="9">
    <conflict type="frameshift">
        <sequence resource="EMBL-CDS" id="AAD34083"/>
    </conflict>
</comment>
<reference key="1">
    <citation type="submission" date="2001-01" db="EMBL/GenBank/DDBJ databases">
        <title>Description of the human SSC1/ELOVL1 gene. Relocation of the CDC20 gene to human chromosome 1 support a bi-directional transcription of the human SSC1/ELOVL1 and CDC20 genes.</title>
        <authorList>
            <person name="Asadi A."/>
            <person name="Jacobsson A."/>
        </authorList>
    </citation>
    <scope>NUCLEOTIDE SEQUENCE [MRNA] (ISOFORM 1)</scope>
</reference>
<reference key="2">
    <citation type="journal article" date="2000" name="Genome Res.">
        <title>Identification of novel human genes evolutionarily conserved in Caenorhabditis elegans by comparative proteomics.</title>
        <authorList>
            <person name="Lai C.-H."/>
            <person name="Chou C.-Y."/>
            <person name="Ch'ang L.-Y."/>
            <person name="Liu C.-S."/>
            <person name="Lin W.-C."/>
        </authorList>
    </citation>
    <scope>NUCLEOTIDE SEQUENCE [LARGE SCALE MRNA] (ISOFORM 1)</scope>
</reference>
<reference key="3">
    <citation type="journal article" date="2004" name="Nat. Genet.">
        <title>Complete sequencing and characterization of 21,243 full-length human cDNAs.</title>
        <authorList>
            <person name="Ota T."/>
            <person name="Suzuki Y."/>
            <person name="Nishikawa T."/>
            <person name="Otsuki T."/>
            <person name="Sugiyama T."/>
            <person name="Irie R."/>
            <person name="Wakamatsu A."/>
            <person name="Hayashi K."/>
            <person name="Sato H."/>
            <person name="Nagai K."/>
            <person name="Kimura K."/>
            <person name="Makita H."/>
            <person name="Sekine M."/>
            <person name="Obayashi M."/>
            <person name="Nishi T."/>
            <person name="Shibahara T."/>
            <person name="Tanaka T."/>
            <person name="Ishii S."/>
            <person name="Yamamoto J."/>
            <person name="Saito K."/>
            <person name="Kawai Y."/>
            <person name="Isono Y."/>
            <person name="Nakamura Y."/>
            <person name="Nagahari K."/>
            <person name="Murakami K."/>
            <person name="Yasuda T."/>
            <person name="Iwayanagi T."/>
            <person name="Wagatsuma M."/>
            <person name="Shiratori A."/>
            <person name="Sudo H."/>
            <person name="Hosoiri T."/>
            <person name="Kaku Y."/>
            <person name="Kodaira H."/>
            <person name="Kondo H."/>
            <person name="Sugawara M."/>
            <person name="Takahashi M."/>
            <person name="Kanda K."/>
            <person name="Yokoi T."/>
            <person name="Furuya T."/>
            <person name="Kikkawa E."/>
            <person name="Omura Y."/>
            <person name="Abe K."/>
            <person name="Kamihara K."/>
            <person name="Katsuta N."/>
            <person name="Sato K."/>
            <person name="Tanikawa M."/>
            <person name="Yamazaki M."/>
            <person name="Ninomiya K."/>
            <person name="Ishibashi T."/>
            <person name="Yamashita H."/>
            <person name="Murakawa K."/>
            <person name="Fujimori K."/>
            <person name="Tanai H."/>
            <person name="Kimata M."/>
            <person name="Watanabe M."/>
            <person name="Hiraoka S."/>
            <person name="Chiba Y."/>
            <person name="Ishida S."/>
            <person name="Ono Y."/>
            <person name="Takiguchi S."/>
            <person name="Watanabe S."/>
            <person name="Yosida M."/>
            <person name="Hotuta T."/>
            <person name="Kusano J."/>
            <person name="Kanehori K."/>
            <person name="Takahashi-Fujii A."/>
            <person name="Hara H."/>
            <person name="Tanase T.-O."/>
            <person name="Nomura Y."/>
            <person name="Togiya S."/>
            <person name="Komai F."/>
            <person name="Hara R."/>
            <person name="Takeuchi K."/>
            <person name="Arita M."/>
            <person name="Imose N."/>
            <person name="Musashino K."/>
            <person name="Yuuki H."/>
            <person name="Oshima A."/>
            <person name="Sasaki N."/>
            <person name="Aotsuka S."/>
            <person name="Yoshikawa Y."/>
            <person name="Matsunawa H."/>
            <person name="Ichihara T."/>
            <person name="Shiohata N."/>
            <person name="Sano S."/>
            <person name="Moriya S."/>
            <person name="Momiyama H."/>
            <person name="Satoh N."/>
            <person name="Takami S."/>
            <person name="Terashima Y."/>
            <person name="Suzuki O."/>
            <person name="Nakagawa S."/>
            <person name="Senoh A."/>
            <person name="Mizoguchi H."/>
            <person name="Goto Y."/>
            <person name="Shimizu F."/>
            <person name="Wakebe H."/>
            <person name="Hishigaki H."/>
            <person name="Watanabe T."/>
            <person name="Sugiyama A."/>
            <person name="Takemoto M."/>
            <person name="Kawakami B."/>
            <person name="Yamazaki M."/>
            <person name="Watanabe K."/>
            <person name="Kumagai A."/>
            <person name="Itakura S."/>
            <person name="Fukuzumi Y."/>
            <person name="Fujimori Y."/>
            <person name="Komiyama M."/>
            <person name="Tashiro H."/>
            <person name="Tanigami A."/>
            <person name="Fujiwara T."/>
            <person name="Ono T."/>
            <person name="Yamada K."/>
            <person name="Fujii Y."/>
            <person name="Ozaki K."/>
            <person name="Hirao M."/>
            <person name="Ohmori Y."/>
            <person name="Kawabata A."/>
            <person name="Hikiji T."/>
            <person name="Kobatake N."/>
            <person name="Inagaki H."/>
            <person name="Ikema Y."/>
            <person name="Okamoto S."/>
            <person name="Okitani R."/>
            <person name="Kawakami T."/>
            <person name="Noguchi S."/>
            <person name="Itoh T."/>
            <person name="Shigeta K."/>
            <person name="Senba T."/>
            <person name="Matsumura K."/>
            <person name="Nakajima Y."/>
            <person name="Mizuno T."/>
            <person name="Morinaga M."/>
            <person name="Sasaki M."/>
            <person name="Togashi T."/>
            <person name="Oyama M."/>
            <person name="Hata H."/>
            <person name="Watanabe M."/>
            <person name="Komatsu T."/>
            <person name="Mizushima-Sugano J."/>
            <person name="Satoh T."/>
            <person name="Shirai Y."/>
            <person name="Takahashi Y."/>
            <person name="Nakagawa K."/>
            <person name="Okumura K."/>
            <person name="Nagase T."/>
            <person name="Nomura N."/>
            <person name="Kikuchi H."/>
            <person name="Masuho Y."/>
            <person name="Yamashita R."/>
            <person name="Nakai K."/>
            <person name="Yada T."/>
            <person name="Nakamura Y."/>
            <person name="Ohara O."/>
            <person name="Isogai T."/>
            <person name="Sugano S."/>
        </authorList>
    </citation>
    <scope>NUCLEOTIDE SEQUENCE [LARGE SCALE MRNA] (ISOFORMS 1 AND 2)</scope>
    <source>
        <tissue>Adipose tissue</tissue>
    </source>
</reference>
<reference key="4">
    <citation type="journal article" date="2006" name="Nature">
        <title>The DNA sequence and biological annotation of human chromosome 1.</title>
        <authorList>
            <person name="Gregory S.G."/>
            <person name="Barlow K.F."/>
            <person name="McLay K.E."/>
            <person name="Kaul R."/>
            <person name="Swarbreck D."/>
            <person name="Dunham A."/>
            <person name="Scott C.E."/>
            <person name="Howe K.L."/>
            <person name="Woodfine K."/>
            <person name="Spencer C.C.A."/>
            <person name="Jones M.C."/>
            <person name="Gillson C."/>
            <person name="Searle S."/>
            <person name="Zhou Y."/>
            <person name="Kokocinski F."/>
            <person name="McDonald L."/>
            <person name="Evans R."/>
            <person name="Phillips K."/>
            <person name="Atkinson A."/>
            <person name="Cooper R."/>
            <person name="Jones C."/>
            <person name="Hall R.E."/>
            <person name="Andrews T.D."/>
            <person name="Lloyd C."/>
            <person name="Ainscough R."/>
            <person name="Almeida J.P."/>
            <person name="Ambrose K.D."/>
            <person name="Anderson F."/>
            <person name="Andrew R.W."/>
            <person name="Ashwell R.I.S."/>
            <person name="Aubin K."/>
            <person name="Babbage A.K."/>
            <person name="Bagguley C.L."/>
            <person name="Bailey J."/>
            <person name="Beasley H."/>
            <person name="Bethel G."/>
            <person name="Bird C.P."/>
            <person name="Bray-Allen S."/>
            <person name="Brown J.Y."/>
            <person name="Brown A.J."/>
            <person name="Buckley D."/>
            <person name="Burton J."/>
            <person name="Bye J."/>
            <person name="Carder C."/>
            <person name="Chapman J.C."/>
            <person name="Clark S.Y."/>
            <person name="Clarke G."/>
            <person name="Clee C."/>
            <person name="Cobley V."/>
            <person name="Collier R.E."/>
            <person name="Corby N."/>
            <person name="Coville G.J."/>
            <person name="Davies J."/>
            <person name="Deadman R."/>
            <person name="Dunn M."/>
            <person name="Earthrowl M."/>
            <person name="Ellington A.G."/>
            <person name="Errington H."/>
            <person name="Frankish A."/>
            <person name="Frankland J."/>
            <person name="French L."/>
            <person name="Garner P."/>
            <person name="Garnett J."/>
            <person name="Gay L."/>
            <person name="Ghori M.R.J."/>
            <person name="Gibson R."/>
            <person name="Gilby L.M."/>
            <person name="Gillett W."/>
            <person name="Glithero R.J."/>
            <person name="Grafham D.V."/>
            <person name="Griffiths C."/>
            <person name="Griffiths-Jones S."/>
            <person name="Grocock R."/>
            <person name="Hammond S."/>
            <person name="Harrison E.S.I."/>
            <person name="Hart E."/>
            <person name="Haugen E."/>
            <person name="Heath P.D."/>
            <person name="Holmes S."/>
            <person name="Holt K."/>
            <person name="Howden P.J."/>
            <person name="Hunt A.R."/>
            <person name="Hunt S.E."/>
            <person name="Hunter G."/>
            <person name="Isherwood J."/>
            <person name="James R."/>
            <person name="Johnson C."/>
            <person name="Johnson D."/>
            <person name="Joy A."/>
            <person name="Kay M."/>
            <person name="Kershaw J.K."/>
            <person name="Kibukawa M."/>
            <person name="Kimberley A.M."/>
            <person name="King A."/>
            <person name="Knights A.J."/>
            <person name="Lad H."/>
            <person name="Laird G."/>
            <person name="Lawlor S."/>
            <person name="Leongamornlert D.A."/>
            <person name="Lloyd D.M."/>
            <person name="Loveland J."/>
            <person name="Lovell J."/>
            <person name="Lush M.J."/>
            <person name="Lyne R."/>
            <person name="Martin S."/>
            <person name="Mashreghi-Mohammadi M."/>
            <person name="Matthews L."/>
            <person name="Matthews N.S.W."/>
            <person name="McLaren S."/>
            <person name="Milne S."/>
            <person name="Mistry S."/>
            <person name="Moore M.J.F."/>
            <person name="Nickerson T."/>
            <person name="O'Dell C.N."/>
            <person name="Oliver K."/>
            <person name="Palmeiri A."/>
            <person name="Palmer S.A."/>
            <person name="Parker A."/>
            <person name="Patel D."/>
            <person name="Pearce A.V."/>
            <person name="Peck A.I."/>
            <person name="Pelan S."/>
            <person name="Phelps K."/>
            <person name="Phillimore B.J."/>
            <person name="Plumb R."/>
            <person name="Rajan J."/>
            <person name="Raymond C."/>
            <person name="Rouse G."/>
            <person name="Saenphimmachak C."/>
            <person name="Sehra H.K."/>
            <person name="Sheridan E."/>
            <person name="Shownkeen R."/>
            <person name="Sims S."/>
            <person name="Skuce C.D."/>
            <person name="Smith M."/>
            <person name="Steward C."/>
            <person name="Subramanian S."/>
            <person name="Sycamore N."/>
            <person name="Tracey A."/>
            <person name="Tromans A."/>
            <person name="Van Helmond Z."/>
            <person name="Wall M."/>
            <person name="Wallis J.M."/>
            <person name="White S."/>
            <person name="Whitehead S.L."/>
            <person name="Wilkinson J.E."/>
            <person name="Willey D.L."/>
            <person name="Williams H."/>
            <person name="Wilming L."/>
            <person name="Wray P.W."/>
            <person name="Wu Z."/>
            <person name="Coulson A."/>
            <person name="Vaudin M."/>
            <person name="Sulston J.E."/>
            <person name="Durbin R.M."/>
            <person name="Hubbard T."/>
            <person name="Wooster R."/>
            <person name="Dunham I."/>
            <person name="Carter N.P."/>
            <person name="McVean G."/>
            <person name="Ross M.T."/>
            <person name="Harrow J."/>
            <person name="Olson M.V."/>
            <person name="Beck S."/>
            <person name="Rogers J."/>
            <person name="Bentley D.R."/>
        </authorList>
    </citation>
    <scope>NUCLEOTIDE SEQUENCE [LARGE SCALE GENOMIC DNA]</scope>
</reference>
<reference key="5">
    <citation type="journal article" date="2004" name="Genome Res.">
        <title>The status, quality, and expansion of the NIH full-length cDNA project: the Mammalian Gene Collection (MGC).</title>
        <authorList>
            <consortium name="The MGC Project Team"/>
        </authorList>
    </citation>
    <scope>NUCLEOTIDE SEQUENCE [LARGE SCALE MRNA] (ISOFORM 1)</scope>
    <source>
        <tissue>Kidney</tissue>
    </source>
</reference>
<reference key="6">
    <citation type="journal article" date="2006" name="Prog. Lipid Res.">
        <title>Fatty acid elongases in mammals: their regulation and roles in metabolism.</title>
        <authorList>
            <person name="Jakobsson A."/>
            <person name="Westerberg R."/>
            <person name="Jacobsson A."/>
        </authorList>
    </citation>
    <scope>REVIEW</scope>
</reference>
<reference key="7">
    <citation type="journal article" date="2009" name="Lipids">
        <title>Development of a high-density assay for long-chain fatty acyl-CoA elongases.</title>
        <authorList>
            <person name="Kitazawa H."/>
            <person name="Miyamoto Y."/>
            <person name="Shimamura K."/>
            <person name="Nagumo A."/>
            <person name="Tokita S."/>
        </authorList>
    </citation>
    <scope>CATALYTIC ACTIVITY</scope>
</reference>
<reference key="8">
    <citation type="journal article" date="2010" name="EMBO Mol. Med.">
        <title>The role of ELOVL1 in very long-chain fatty acid homeostasis and X-linked adrenoleukodystrophy.</title>
        <authorList>
            <person name="Ofman R."/>
            <person name="Dijkstra I.M.E."/>
            <person name="van Roermund C.W.T."/>
            <person name="Burger N."/>
            <person name="Turkenburg M."/>
            <person name="van Cruchten A."/>
            <person name="van Engen C.E."/>
            <person name="Wanders R.J.A."/>
            <person name="Kemp S."/>
        </authorList>
    </citation>
    <scope>FUNCTION</scope>
    <scope>CATALYTIC ACTIVITY</scope>
    <scope>PATHWAY</scope>
</reference>
<reference key="9">
    <citation type="journal article" date="2010" name="Proc. Natl. Acad. Sci. U.S.A.">
        <title>ELOVL1 production of C24 acyl-CoAs is linked to C24 sphingolipid synthesis.</title>
        <authorList>
            <person name="Ohno Y."/>
            <person name="Suto S."/>
            <person name="Yamanaka M."/>
            <person name="Mizutani Y."/>
            <person name="Mitsutake S."/>
            <person name="Igarashi Y."/>
            <person name="Sassa T."/>
            <person name="Kihara A."/>
        </authorList>
    </citation>
    <scope>FUNCTION</scope>
    <scope>CATALYTIC ACTIVITY</scope>
    <scope>PATHWAY</scope>
    <scope>SUBCELLULAR LOCATION</scope>
    <scope>TISSUE SPECIFICITY</scope>
    <scope>INTERACTION WITH LASS2; HSD17B12 AND TECR</scope>
</reference>
<reference key="10">
    <citation type="journal article" date="2012" name="Mol. Cell. Proteomics">
        <title>Comparative large-scale characterisation of plant vs. mammal proteins reveals similar and idiosyncratic N-alpha acetylation features.</title>
        <authorList>
            <person name="Bienvenut W.V."/>
            <person name="Sumpton D."/>
            <person name="Martinez A."/>
            <person name="Lilla S."/>
            <person name="Espagne C."/>
            <person name="Meinnel T."/>
            <person name="Giglione C."/>
        </authorList>
    </citation>
    <scope>ACETYLATION [LARGE SCALE ANALYSIS] AT MET-1</scope>
    <scope>IDENTIFICATION BY MASS SPECTROMETRY [LARGE SCALE ANALYSIS]</scope>
</reference>
<reference key="11">
    <citation type="journal article" date="2015" name="Proteomics">
        <title>N-terminome analysis of the human mitochondrial proteome.</title>
        <authorList>
            <person name="Vaca Jacome A.S."/>
            <person name="Rabilloud T."/>
            <person name="Schaeffer-Reiss C."/>
            <person name="Rompais M."/>
            <person name="Ayoub D."/>
            <person name="Lane L."/>
            <person name="Bairoch A."/>
            <person name="Van Dorsselaer A."/>
            <person name="Carapito C."/>
        </authorList>
    </citation>
    <scope>ACETYLATION [LARGE SCALE ANALYSIS] AT MET-1</scope>
    <scope>IDENTIFICATION BY MASS SPECTROMETRY [LARGE SCALE ANALYSIS]</scope>
</reference>
<reference key="12">
    <citation type="journal article" date="2018" name="J. Med. Genet.">
        <title>Dominant ELOVL1 mutation causes neurological disorder with ichthyotic keratoderma, spasticity, hypomyelination and dysmorphic features.</title>
        <authorList>
            <person name="Kutkowska-Kazmierczak A."/>
            <person name="Rydzanicz M."/>
            <person name="Chlebowski A."/>
            <person name="Klosowska-Kosicka K."/>
            <person name="Mika A."/>
            <person name="Gruchota J."/>
            <person name="Jurkiewicz E."/>
            <person name="Kowalewski C."/>
            <person name="Pollak A."/>
            <person name="Stradomska T.J."/>
            <person name="Kmiec T."/>
            <person name="Jakubowski R."/>
            <person name="Gasperowicz P."/>
            <person name="Walczak A."/>
            <person name="Sladowski D."/>
            <person name="Jankowska-Steifer E."/>
            <person name="Korniszewski L."/>
            <person name="Kosinska J."/>
            <person name="Obersztyn E."/>
            <person name="Nowak W."/>
            <person name="Sledzinski T."/>
            <person name="Dziembowski A."/>
            <person name="Ploski R."/>
        </authorList>
    </citation>
    <scope>FUNCTION</scope>
    <scope>PATHWAY</scope>
    <scope>CATALYTIC ACTIVITY</scope>
    <scope>INVOLVEMENT IN IKSHD</scope>
    <scope>VARIANT IKSHD PHE-165</scope>
    <scope>CHARACTERIZATION OF VARIANT IKSHD PHE-165</scope>
</reference>
<reference key="13">
    <citation type="journal article" date="2019" name="J. Med. Genet.">
        <title>De novo mutation in ELOVL1 causes ichthyosis, acanthosis nigricans, hypomyelination, spastic paraplegia, high frequency deafness and optic atrophy.</title>
        <authorList>
            <person name="Mueller N."/>
            <person name="Sassa T."/>
            <person name="Morales-Gonzalez S."/>
            <person name="Schneider J."/>
            <person name="Salchow D.J."/>
            <person name="Seelow D."/>
            <person name="Knierim E."/>
            <person name="Stenzel W."/>
            <person name="Kihara A."/>
            <person name="Schuelke M."/>
        </authorList>
    </citation>
    <scope>FUNCTION</scope>
    <scope>TISSUE SPECIFICITY</scope>
    <scope>SUBCELLULAR LOCATION</scope>
    <scope>CATALYTIC ACTIVITY</scope>
    <scope>PATHWAY</scope>
    <scope>INVOLVEMENT IN IKSHD</scope>
    <scope>VARIANT IKSHD PHE-165</scope>
    <scope>CHARACTERIZATION OF VARIANT IKSHD PHE-165</scope>
</reference>
<reference key="14">
    <citation type="journal article" date="2024" name="Biochem. Biophys. Res. Commun.">
        <title>The 3-hydroxyacyl-CoA dehydratase 1/2 form complex with trans-2-enoyl-CoA reductase involved in substrates transfer in very long chain fatty acid elongation.</title>
        <authorList>
            <person name="Zhou Y."/>
            <person name="Lv R."/>
            <person name="Ye R.D."/>
            <person name="Ren R."/>
            <person name="Yu L."/>
        </authorList>
    </citation>
    <scope>INTERACTION WITH TECR</scope>
</reference>
<protein>
    <recommendedName>
        <fullName evidence="1">Very long chain fatty acid elongase 1</fullName>
        <ecNumber evidence="1 2 3 4">2.3.1.199</ecNumber>
    </recommendedName>
    <alternativeName>
        <fullName evidence="1">3-keto acyl-CoA synthase ELOVL1</fullName>
    </alternativeName>
    <alternativeName>
        <fullName evidence="1">ELOVL fatty acid elongase 1</fullName>
        <shortName evidence="1">ELOVL FA elongase 1</shortName>
    </alternativeName>
    <alternativeName>
        <fullName evidence="1">Elongation of very long chain fatty acids protein 1</fullName>
    </alternativeName>
    <alternativeName>
        <fullName evidence="1">Very long chain 3-ketoacyl-CoA synthase 1</fullName>
    </alternativeName>
    <alternativeName>
        <fullName evidence="1">Very long chain 3-oxoacyl-CoA synthase 1</fullName>
    </alternativeName>
</protein>
<dbReference type="EC" id="2.3.1.199" evidence="1 2 3 4"/>
<dbReference type="EMBL" id="AF336793">
    <property type="protein sequence ID" value="AAL71993.1"/>
    <property type="molecule type" value="mRNA"/>
</dbReference>
<dbReference type="EMBL" id="AF151846">
    <property type="protein sequence ID" value="AAD34083.1"/>
    <property type="status" value="ALT_FRAME"/>
    <property type="molecule type" value="mRNA"/>
</dbReference>
<dbReference type="EMBL" id="AK001653">
    <property type="protein sequence ID" value="BAA91813.1"/>
    <property type="molecule type" value="mRNA"/>
</dbReference>
<dbReference type="EMBL" id="AK222498">
    <property type="protein sequence ID" value="BAD96218.1"/>
    <property type="molecule type" value="mRNA"/>
</dbReference>
<dbReference type="EMBL" id="AK298163">
    <property type="protein sequence ID" value="BAG60436.1"/>
    <property type="molecule type" value="mRNA"/>
</dbReference>
<dbReference type="EMBL" id="AL139289">
    <property type="status" value="NOT_ANNOTATED_CDS"/>
    <property type="molecule type" value="Genomic_DNA"/>
</dbReference>
<dbReference type="EMBL" id="BC000618">
    <property type="protein sequence ID" value="AAH00618.1"/>
    <property type="molecule type" value="mRNA"/>
</dbReference>
<dbReference type="CCDS" id="CCDS485.1">
    <molecule id="Q9BW60-1"/>
</dbReference>
<dbReference type="CCDS" id="CCDS57987.1">
    <molecule id="Q9BW60-2"/>
</dbReference>
<dbReference type="RefSeq" id="NP_001243328.1">
    <molecule id="Q9BW60-1"/>
    <property type="nucleotide sequence ID" value="NM_001256399.2"/>
</dbReference>
<dbReference type="RefSeq" id="NP_001243330.1">
    <molecule id="Q9BW60-2"/>
    <property type="nucleotide sequence ID" value="NM_001256401.2"/>
</dbReference>
<dbReference type="RefSeq" id="NP_001243331.1">
    <property type="nucleotide sequence ID" value="NM_001256402.1"/>
</dbReference>
<dbReference type="RefSeq" id="NP_073732.1">
    <molecule id="Q9BW60-1"/>
    <property type="nucleotide sequence ID" value="NM_022821.4"/>
</dbReference>
<dbReference type="SMR" id="Q9BW60"/>
<dbReference type="BioGRID" id="122312">
    <property type="interactions" value="62"/>
</dbReference>
<dbReference type="FunCoup" id="Q9BW60">
    <property type="interactions" value="767"/>
</dbReference>
<dbReference type="IntAct" id="Q9BW60">
    <property type="interactions" value="33"/>
</dbReference>
<dbReference type="MINT" id="Q9BW60"/>
<dbReference type="STRING" id="9606.ENSP00000477602"/>
<dbReference type="BindingDB" id="Q9BW60"/>
<dbReference type="ChEMBL" id="CHEMBL6001"/>
<dbReference type="SwissLipids" id="SLP:000000249"/>
<dbReference type="TCDB" id="8.A.221.1.5">
    <property type="family name" value="the very long chain fatty acid elongase (vlcfa-e) family"/>
</dbReference>
<dbReference type="GlyGen" id="Q9BW60">
    <property type="glycosylation" value="1 site, 1 O-linked glycan (1 site)"/>
</dbReference>
<dbReference type="iPTMnet" id="Q9BW60"/>
<dbReference type="MetOSite" id="Q9BW60"/>
<dbReference type="PhosphoSitePlus" id="Q9BW60"/>
<dbReference type="SwissPalm" id="Q9BW60"/>
<dbReference type="BioMuta" id="ELOVL1"/>
<dbReference type="DMDM" id="20137931"/>
<dbReference type="jPOST" id="Q9BW60"/>
<dbReference type="MassIVE" id="Q9BW60"/>
<dbReference type="PaxDb" id="9606-ENSP00000477602"/>
<dbReference type="PeptideAtlas" id="Q9BW60"/>
<dbReference type="ProteomicsDB" id="4745"/>
<dbReference type="ProteomicsDB" id="79254">
    <molecule id="Q9BW60-1"/>
</dbReference>
<dbReference type="Pumba" id="Q9BW60"/>
<dbReference type="TopDownProteomics" id="Q9BW60-1">
    <molecule id="Q9BW60-1"/>
</dbReference>
<dbReference type="Antibodypedia" id="32316">
    <property type="antibodies" value="215 antibodies from 26 providers"/>
</dbReference>
<dbReference type="DNASU" id="64834"/>
<dbReference type="Ensembl" id="ENST00000372458.8">
    <molecule id="Q9BW60-1"/>
    <property type="protein sequence ID" value="ENSP00000361536.3"/>
    <property type="gene ID" value="ENSG00000066322.15"/>
</dbReference>
<dbReference type="Ensembl" id="ENST00000413844.3">
    <molecule id="Q9BW60-2"/>
    <property type="protein sequence ID" value="ENSP00000416024.2"/>
    <property type="gene ID" value="ENSG00000066322.15"/>
</dbReference>
<dbReference type="Ensembl" id="ENST00000621943.4">
    <molecule id="Q9BW60-1"/>
    <property type="protein sequence ID" value="ENSP00000477602.1"/>
    <property type="gene ID" value="ENSG00000066322.15"/>
</dbReference>
<dbReference type="GeneID" id="64834"/>
<dbReference type="KEGG" id="hsa:64834"/>
<dbReference type="MANE-Select" id="ENST00000372458.8">
    <property type="protein sequence ID" value="ENSP00000361536.3"/>
    <property type="RefSeq nucleotide sequence ID" value="NM_022821.4"/>
    <property type="RefSeq protein sequence ID" value="NP_073732.1"/>
</dbReference>
<dbReference type="UCSC" id="uc001cjb.5">
    <molecule id="Q9BW60-1"/>
    <property type="organism name" value="human"/>
</dbReference>
<dbReference type="AGR" id="HGNC:14418"/>
<dbReference type="CTD" id="64834"/>
<dbReference type="DisGeNET" id="64834"/>
<dbReference type="GeneCards" id="ELOVL1"/>
<dbReference type="HGNC" id="HGNC:14418">
    <property type="gene designation" value="ELOVL1"/>
</dbReference>
<dbReference type="HPA" id="ENSG00000066322">
    <property type="expression patterns" value="Tissue enhanced (brain)"/>
</dbReference>
<dbReference type="MalaCards" id="ELOVL1"/>
<dbReference type="MIM" id="611813">
    <property type="type" value="gene"/>
</dbReference>
<dbReference type="MIM" id="618527">
    <property type="type" value="phenotype"/>
</dbReference>
<dbReference type="neXtProt" id="NX_Q9BW60"/>
<dbReference type="OpenTargets" id="ENSG00000066322"/>
<dbReference type="PharmGKB" id="PA27760"/>
<dbReference type="VEuPathDB" id="HostDB:ENSG00000066322"/>
<dbReference type="eggNOG" id="KOG3071">
    <property type="taxonomic scope" value="Eukaryota"/>
</dbReference>
<dbReference type="GeneTree" id="ENSGT01050000244838"/>
<dbReference type="HOGENOM" id="CLU_048483_0_0_1"/>
<dbReference type="InParanoid" id="Q9BW60"/>
<dbReference type="OMA" id="YSTTRHR"/>
<dbReference type="OrthoDB" id="434092at2759"/>
<dbReference type="PAN-GO" id="Q9BW60">
    <property type="GO annotations" value="7 GO annotations based on evolutionary models"/>
</dbReference>
<dbReference type="PhylomeDB" id="Q9BW60"/>
<dbReference type="TreeFam" id="TF323454"/>
<dbReference type="PathwayCommons" id="Q9BW60"/>
<dbReference type="Reactome" id="R-HSA-2046105">
    <property type="pathway name" value="Linoleic acid (LA) metabolism"/>
</dbReference>
<dbReference type="Reactome" id="R-HSA-2046106">
    <property type="pathway name" value="alpha-linolenic acid (ALA) metabolism"/>
</dbReference>
<dbReference type="Reactome" id="R-HSA-75876">
    <property type="pathway name" value="Synthesis of very long-chain fatty acyl-CoAs"/>
</dbReference>
<dbReference type="SignaLink" id="Q9BW60"/>
<dbReference type="SIGNOR" id="Q9BW60"/>
<dbReference type="UniPathway" id="UPA00094"/>
<dbReference type="BioGRID-ORCS" id="64834">
    <property type="hits" value="106 hits in 1157 CRISPR screens"/>
</dbReference>
<dbReference type="CD-CODE" id="91857CE7">
    <property type="entry name" value="Nucleolus"/>
</dbReference>
<dbReference type="ChiTaRS" id="ELOVL1">
    <property type="organism name" value="human"/>
</dbReference>
<dbReference type="GenomeRNAi" id="64834"/>
<dbReference type="Pharos" id="Q9BW60">
    <property type="development level" value="Tbio"/>
</dbReference>
<dbReference type="PRO" id="PR:Q9BW60"/>
<dbReference type="Proteomes" id="UP000005640">
    <property type="component" value="Chromosome 1"/>
</dbReference>
<dbReference type="RNAct" id="Q9BW60">
    <property type="molecule type" value="protein"/>
</dbReference>
<dbReference type="Bgee" id="ENSG00000066322">
    <property type="expression patterns" value="Expressed in C1 segment of cervical spinal cord and 97 other cell types or tissues"/>
</dbReference>
<dbReference type="GO" id="GO:0005783">
    <property type="term" value="C:endoplasmic reticulum"/>
    <property type="evidence" value="ECO:0000314"/>
    <property type="project" value="HPA"/>
</dbReference>
<dbReference type="GO" id="GO:0005789">
    <property type="term" value="C:endoplasmic reticulum membrane"/>
    <property type="evidence" value="ECO:0000318"/>
    <property type="project" value="GO_Central"/>
</dbReference>
<dbReference type="GO" id="GO:0016020">
    <property type="term" value="C:membrane"/>
    <property type="evidence" value="ECO:0007005"/>
    <property type="project" value="UniProtKB"/>
</dbReference>
<dbReference type="GO" id="GO:0009922">
    <property type="term" value="F:fatty acid elongase activity"/>
    <property type="evidence" value="ECO:0000314"/>
    <property type="project" value="UniProtKB"/>
</dbReference>
<dbReference type="GO" id="GO:0036109">
    <property type="term" value="P:alpha-linolenic acid metabolic process"/>
    <property type="evidence" value="ECO:0000304"/>
    <property type="project" value="Reactome"/>
</dbReference>
<dbReference type="GO" id="GO:0046513">
    <property type="term" value="P:ceramide biosynthetic process"/>
    <property type="evidence" value="ECO:0007669"/>
    <property type="project" value="Ensembl"/>
</dbReference>
<dbReference type="GO" id="GO:0061436">
    <property type="term" value="P:establishment of skin barrier"/>
    <property type="evidence" value="ECO:0007669"/>
    <property type="project" value="Ensembl"/>
</dbReference>
<dbReference type="GO" id="GO:0034625">
    <property type="term" value="P:fatty acid elongation, monounsaturated fatty acid"/>
    <property type="evidence" value="ECO:0000314"/>
    <property type="project" value="UniProtKB"/>
</dbReference>
<dbReference type="GO" id="GO:0034626">
    <property type="term" value="P:fatty acid elongation, polyunsaturated fatty acid"/>
    <property type="evidence" value="ECO:0000318"/>
    <property type="project" value="GO_Central"/>
</dbReference>
<dbReference type="GO" id="GO:0019367">
    <property type="term" value="P:fatty acid elongation, saturated fatty acid"/>
    <property type="evidence" value="ECO:0000314"/>
    <property type="project" value="UniProtKB"/>
</dbReference>
<dbReference type="GO" id="GO:0043651">
    <property type="term" value="P:linoleic acid metabolic process"/>
    <property type="evidence" value="ECO:0000304"/>
    <property type="project" value="Reactome"/>
</dbReference>
<dbReference type="GO" id="GO:0035338">
    <property type="term" value="P:long-chain fatty-acyl-CoA biosynthetic process"/>
    <property type="evidence" value="ECO:0000304"/>
    <property type="project" value="Reactome"/>
</dbReference>
<dbReference type="GO" id="GO:0030148">
    <property type="term" value="P:sphingolipid biosynthetic process"/>
    <property type="evidence" value="ECO:0000315"/>
    <property type="project" value="UniProtKB"/>
</dbReference>
<dbReference type="GO" id="GO:0006636">
    <property type="term" value="P:unsaturated fatty acid biosynthetic process"/>
    <property type="evidence" value="ECO:0007669"/>
    <property type="project" value="UniProtKB-UniRule"/>
</dbReference>
<dbReference type="GO" id="GO:0042761">
    <property type="term" value="P:very long-chain fatty acid biosynthetic process"/>
    <property type="evidence" value="ECO:0000314"/>
    <property type="project" value="UniProtKB"/>
</dbReference>
<dbReference type="HAMAP" id="MF_03201">
    <property type="entry name" value="VLCF_elongase_1"/>
    <property type="match status" value="1"/>
</dbReference>
<dbReference type="InterPro" id="IPR030457">
    <property type="entry name" value="ELO_CS"/>
</dbReference>
<dbReference type="InterPro" id="IPR002076">
    <property type="entry name" value="ELO_fam"/>
</dbReference>
<dbReference type="InterPro" id="IPR033681">
    <property type="entry name" value="ELOVL1"/>
</dbReference>
<dbReference type="PANTHER" id="PTHR11157:SF19">
    <property type="entry name" value="ELONGATION OF VERY LONG CHAIN FATTY ACIDS PROTEIN 1"/>
    <property type="match status" value="1"/>
</dbReference>
<dbReference type="PANTHER" id="PTHR11157">
    <property type="entry name" value="FATTY ACID ACYL TRANSFERASE-RELATED"/>
    <property type="match status" value="1"/>
</dbReference>
<dbReference type="Pfam" id="PF01151">
    <property type="entry name" value="ELO"/>
    <property type="match status" value="1"/>
</dbReference>
<dbReference type="PROSITE" id="PS01188">
    <property type="entry name" value="ELO"/>
    <property type="match status" value="1"/>
</dbReference>
<evidence type="ECO:0000255" key="1">
    <source>
        <dbReference type="HAMAP-Rule" id="MF_03201"/>
    </source>
</evidence>
<evidence type="ECO:0000269" key="2">
    <source>
    </source>
</evidence>
<evidence type="ECO:0000269" key="3">
    <source>
    </source>
</evidence>
<evidence type="ECO:0000269" key="4">
    <source>
    </source>
</evidence>
<evidence type="ECO:0000269" key="5">
    <source>
    </source>
</evidence>
<evidence type="ECO:0000269" key="6">
    <source>
    </source>
</evidence>
<evidence type="ECO:0000269" key="7">
    <source>
    </source>
</evidence>
<evidence type="ECO:0000303" key="8">
    <source>
    </source>
</evidence>
<evidence type="ECO:0000305" key="9"/>
<evidence type="ECO:0000305" key="10">
    <source>
    </source>
</evidence>
<evidence type="ECO:0000312" key="11">
    <source>
        <dbReference type="HGNC" id="HGNC:14418"/>
    </source>
</evidence>
<evidence type="ECO:0007744" key="12">
    <source>
    </source>
</evidence>
<evidence type="ECO:0007744" key="13">
    <source>
    </source>
</evidence>
<name>ELOV1_HUMAN</name>
<accession>Q9BW60</accession>
<accession>B4DP24</accession>
<accession>Q53HT2</accession>
<accession>Q5JUY3</accession>
<accession>Q8WXU3</accession>
<accession>Q9NVD9</accession>
<accession>Q9Y396</accession>
<gene>
    <name evidence="11" type="primary">ELOVL1</name>
    <name type="synonym">SSC1</name>
    <name type="ORF">CGI-88</name>
</gene>
<sequence length="279" mass="32663">MEAVVNLYQEVMKHADPRIQGYPLMGSPLLMTSILLTYVYFVLSLGPRIMANRKPFQLRGFMIVYNFSLVALSLYIVYEFLMSGWLSTYTWRCDPVDYSNSPEALRMVRVAWLFLFSKFIELMDTVIFILRKKDGQVTFLHVFHHSVLPWSWWWGVKIAPGGMGSFHAMINSSVHVIMYLYYGLSAFGPVAQPYLWWKKHMTAIQLIQFVLVSLHISQYYFMSSCNYQYPVIIHLIWMYGTIFFMLFSNFWYHSYTKGKRLPRALQQNGAPGIAKVKAN</sequence>
<feature type="chain" id="PRO_0000207536" description="Very long chain fatty acid elongase 1">
    <location>
        <begin position="1"/>
        <end position="279"/>
    </location>
</feature>
<feature type="transmembrane region" description="Helical" evidence="1">
    <location>
        <begin position="23"/>
        <end position="43"/>
    </location>
</feature>
<feature type="transmembrane region" description="Helical" evidence="1">
    <location>
        <begin position="61"/>
        <end position="81"/>
    </location>
</feature>
<feature type="transmembrane region" description="Helical" evidence="1">
    <location>
        <begin position="110"/>
        <end position="130"/>
    </location>
</feature>
<feature type="transmembrane region" description="Helical" evidence="1">
    <location>
        <begin position="137"/>
        <end position="154"/>
    </location>
</feature>
<feature type="transmembrane region" description="Helical" evidence="1">
    <location>
        <begin position="176"/>
        <end position="196"/>
    </location>
</feature>
<feature type="transmembrane region" description="Helical" evidence="1">
    <location>
        <begin position="201"/>
        <end position="221"/>
    </location>
</feature>
<feature type="transmembrane region" description="Helical" evidence="1">
    <location>
        <begin position="231"/>
        <end position="251"/>
    </location>
</feature>
<feature type="short sequence motif" description="Di-lysine motif" evidence="1">
    <location>
        <begin position="275"/>
        <end position="279"/>
    </location>
</feature>
<feature type="modified residue" description="N-acetylmethionine" evidence="12 13">
    <location>
        <position position="1"/>
    </location>
</feature>
<feature type="splice variant" id="VSP_045436" description="In isoform 2." evidence="8">
    <location>
        <begin position="80"/>
        <end position="106"/>
    </location>
</feature>
<feature type="sequence variant" id="VAR_083193" description="In IKSHD; loss of fatty acid elongase activity." evidence="5 6">
    <original>S</original>
    <variation>F</variation>
    <location>
        <position position="165"/>
    </location>
</feature>
<feature type="sequence conflict" description="In Ref. 3; BAA91813." evidence="9" ref="3">
    <original>S</original>
    <variation>P</variation>
    <location>
        <position position="68"/>
    </location>
</feature>
<feature type="sequence conflict" description="In Ref. 1; AAL71993." evidence="9" ref="1">
    <original>Y</original>
    <variation>H</variation>
    <location>
        <position position="75"/>
    </location>
</feature>
<feature type="sequence conflict" description="In Ref. 3; BAD96218." evidence="9" ref="3">
    <original>M</original>
    <variation>T</variation>
    <location>
        <position position="201"/>
    </location>
</feature>
<organism>
    <name type="scientific">Homo sapiens</name>
    <name type="common">Human</name>
    <dbReference type="NCBI Taxonomy" id="9606"/>
    <lineage>
        <taxon>Eukaryota</taxon>
        <taxon>Metazoa</taxon>
        <taxon>Chordata</taxon>
        <taxon>Craniata</taxon>
        <taxon>Vertebrata</taxon>
        <taxon>Euteleostomi</taxon>
        <taxon>Mammalia</taxon>
        <taxon>Eutheria</taxon>
        <taxon>Euarchontoglires</taxon>
        <taxon>Primates</taxon>
        <taxon>Haplorrhini</taxon>
        <taxon>Catarrhini</taxon>
        <taxon>Hominidae</taxon>
        <taxon>Homo</taxon>
    </lineage>
</organism>